<name>SYQ_PECAS</name>
<evidence type="ECO:0000255" key="1">
    <source>
        <dbReference type="HAMAP-Rule" id="MF_00126"/>
    </source>
</evidence>
<keyword id="KW-0030">Aminoacyl-tRNA synthetase</keyword>
<keyword id="KW-0067">ATP-binding</keyword>
<keyword id="KW-0963">Cytoplasm</keyword>
<keyword id="KW-0436">Ligase</keyword>
<keyword id="KW-0547">Nucleotide-binding</keyword>
<keyword id="KW-0648">Protein biosynthesis</keyword>
<keyword id="KW-1185">Reference proteome</keyword>
<comment type="catalytic activity">
    <reaction evidence="1">
        <text>tRNA(Gln) + L-glutamine + ATP = L-glutaminyl-tRNA(Gln) + AMP + diphosphate</text>
        <dbReference type="Rhea" id="RHEA:20121"/>
        <dbReference type="Rhea" id="RHEA-COMP:9662"/>
        <dbReference type="Rhea" id="RHEA-COMP:9681"/>
        <dbReference type="ChEBI" id="CHEBI:30616"/>
        <dbReference type="ChEBI" id="CHEBI:33019"/>
        <dbReference type="ChEBI" id="CHEBI:58359"/>
        <dbReference type="ChEBI" id="CHEBI:78442"/>
        <dbReference type="ChEBI" id="CHEBI:78521"/>
        <dbReference type="ChEBI" id="CHEBI:456215"/>
        <dbReference type="EC" id="6.1.1.18"/>
    </reaction>
</comment>
<comment type="subunit">
    <text evidence="1">Monomer.</text>
</comment>
<comment type="subcellular location">
    <subcellularLocation>
        <location evidence="1">Cytoplasm</location>
    </subcellularLocation>
</comment>
<comment type="similarity">
    <text evidence="1">Belongs to the class-I aminoacyl-tRNA synthetase family.</text>
</comment>
<dbReference type="EC" id="6.1.1.18" evidence="1"/>
<dbReference type="EMBL" id="BX950851">
    <property type="protein sequence ID" value="CAG74238.1"/>
    <property type="molecule type" value="Genomic_DNA"/>
</dbReference>
<dbReference type="RefSeq" id="WP_011092914.1">
    <property type="nucleotide sequence ID" value="NC_004547.2"/>
</dbReference>
<dbReference type="SMR" id="Q6D7J7"/>
<dbReference type="STRING" id="218491.ECA1328"/>
<dbReference type="GeneID" id="57208144"/>
<dbReference type="KEGG" id="eca:ECA1328"/>
<dbReference type="PATRIC" id="fig|218491.5.peg.1357"/>
<dbReference type="eggNOG" id="COG0008">
    <property type="taxonomic scope" value="Bacteria"/>
</dbReference>
<dbReference type="HOGENOM" id="CLU_001882_2_3_6"/>
<dbReference type="OrthoDB" id="9801560at2"/>
<dbReference type="Proteomes" id="UP000007966">
    <property type="component" value="Chromosome"/>
</dbReference>
<dbReference type="GO" id="GO:0005829">
    <property type="term" value="C:cytosol"/>
    <property type="evidence" value="ECO:0007669"/>
    <property type="project" value="TreeGrafter"/>
</dbReference>
<dbReference type="GO" id="GO:0005524">
    <property type="term" value="F:ATP binding"/>
    <property type="evidence" value="ECO:0007669"/>
    <property type="project" value="UniProtKB-UniRule"/>
</dbReference>
<dbReference type="GO" id="GO:0004819">
    <property type="term" value="F:glutamine-tRNA ligase activity"/>
    <property type="evidence" value="ECO:0007669"/>
    <property type="project" value="UniProtKB-UniRule"/>
</dbReference>
<dbReference type="GO" id="GO:0006425">
    <property type="term" value="P:glutaminyl-tRNA aminoacylation"/>
    <property type="evidence" value="ECO:0007669"/>
    <property type="project" value="InterPro"/>
</dbReference>
<dbReference type="GO" id="GO:0006424">
    <property type="term" value="P:glutamyl-tRNA aminoacylation"/>
    <property type="evidence" value="ECO:0007669"/>
    <property type="project" value="UniProtKB-UniRule"/>
</dbReference>
<dbReference type="CDD" id="cd00807">
    <property type="entry name" value="GlnRS_core"/>
    <property type="match status" value="1"/>
</dbReference>
<dbReference type="FunFam" id="1.10.1160.10:FF:000001">
    <property type="entry name" value="Glutamine--tRNA ligase"/>
    <property type="match status" value="1"/>
</dbReference>
<dbReference type="FunFam" id="2.40.240.10:FF:000001">
    <property type="entry name" value="Glutamine--tRNA ligase"/>
    <property type="match status" value="1"/>
</dbReference>
<dbReference type="FunFam" id="2.40.240.10:FF:000003">
    <property type="entry name" value="Glutamine--tRNA ligase"/>
    <property type="match status" value="1"/>
</dbReference>
<dbReference type="FunFam" id="3.90.800.10:FF:000001">
    <property type="entry name" value="Glutamine--tRNA ligase"/>
    <property type="match status" value="1"/>
</dbReference>
<dbReference type="FunFam" id="3.40.50.620:FF:000037">
    <property type="entry name" value="Glutamine--tRNA ligase cytoplasmic"/>
    <property type="match status" value="1"/>
</dbReference>
<dbReference type="Gene3D" id="1.10.1160.10">
    <property type="entry name" value="Glutamyl-trna Synthetase, Domain 2"/>
    <property type="match status" value="1"/>
</dbReference>
<dbReference type="Gene3D" id="3.90.800.10">
    <property type="entry name" value="Glutamyl-tRNA Synthetase, Domain 3"/>
    <property type="match status" value="1"/>
</dbReference>
<dbReference type="Gene3D" id="3.40.50.620">
    <property type="entry name" value="HUPs"/>
    <property type="match status" value="1"/>
</dbReference>
<dbReference type="Gene3D" id="2.40.240.10">
    <property type="entry name" value="Ribosomal Protein L25, Chain P"/>
    <property type="match status" value="2"/>
</dbReference>
<dbReference type="HAMAP" id="MF_00126">
    <property type="entry name" value="Gln_tRNA_synth"/>
    <property type="match status" value="1"/>
</dbReference>
<dbReference type="InterPro" id="IPR001412">
    <property type="entry name" value="aa-tRNA-synth_I_CS"/>
</dbReference>
<dbReference type="InterPro" id="IPR004514">
    <property type="entry name" value="Gln-tRNA-synth"/>
</dbReference>
<dbReference type="InterPro" id="IPR050132">
    <property type="entry name" value="Gln/Glu-tRNA_Ligase"/>
</dbReference>
<dbReference type="InterPro" id="IPR022861">
    <property type="entry name" value="Gln_tRNA_ligase_bac"/>
</dbReference>
<dbReference type="InterPro" id="IPR000924">
    <property type="entry name" value="Glu/Gln-tRNA-synth"/>
</dbReference>
<dbReference type="InterPro" id="IPR020058">
    <property type="entry name" value="Glu/Gln-tRNA-synth_Ib_cat-dom"/>
</dbReference>
<dbReference type="InterPro" id="IPR020059">
    <property type="entry name" value="Glu/Gln-tRNA-synth_Ib_codon-bd"/>
</dbReference>
<dbReference type="InterPro" id="IPR020061">
    <property type="entry name" value="Glu_tRNA_lig_a-bdl"/>
</dbReference>
<dbReference type="InterPro" id="IPR020056">
    <property type="entry name" value="Rbsml_bL25/Gln-tRNA_synth_N"/>
</dbReference>
<dbReference type="InterPro" id="IPR011035">
    <property type="entry name" value="Ribosomal_bL25/Gln-tRNA_synth"/>
</dbReference>
<dbReference type="InterPro" id="IPR014729">
    <property type="entry name" value="Rossmann-like_a/b/a_fold"/>
</dbReference>
<dbReference type="InterPro" id="IPR049437">
    <property type="entry name" value="tRNA-synt_1c_C2"/>
</dbReference>
<dbReference type="NCBIfam" id="TIGR00440">
    <property type="entry name" value="glnS"/>
    <property type="match status" value="1"/>
</dbReference>
<dbReference type="NCBIfam" id="NF011291">
    <property type="entry name" value="PRK14703.1"/>
    <property type="match status" value="1"/>
</dbReference>
<dbReference type="PANTHER" id="PTHR43097:SF5">
    <property type="entry name" value="GLUTAMATE--TRNA LIGASE"/>
    <property type="match status" value="1"/>
</dbReference>
<dbReference type="PANTHER" id="PTHR43097">
    <property type="entry name" value="GLUTAMINE-TRNA LIGASE"/>
    <property type="match status" value="1"/>
</dbReference>
<dbReference type="Pfam" id="PF00749">
    <property type="entry name" value="tRNA-synt_1c"/>
    <property type="match status" value="1"/>
</dbReference>
<dbReference type="Pfam" id="PF03950">
    <property type="entry name" value="tRNA-synt_1c_C"/>
    <property type="match status" value="1"/>
</dbReference>
<dbReference type="Pfam" id="PF20974">
    <property type="entry name" value="tRNA-synt_1c_C2"/>
    <property type="match status" value="1"/>
</dbReference>
<dbReference type="PRINTS" id="PR00987">
    <property type="entry name" value="TRNASYNTHGLU"/>
</dbReference>
<dbReference type="SUPFAM" id="SSF52374">
    <property type="entry name" value="Nucleotidylyl transferase"/>
    <property type="match status" value="1"/>
</dbReference>
<dbReference type="SUPFAM" id="SSF50715">
    <property type="entry name" value="Ribosomal protein L25-like"/>
    <property type="match status" value="1"/>
</dbReference>
<dbReference type="PROSITE" id="PS00178">
    <property type="entry name" value="AA_TRNA_LIGASE_I"/>
    <property type="match status" value="1"/>
</dbReference>
<feature type="chain" id="PRO_0000242869" description="Glutamine--tRNA ligase">
    <location>
        <begin position="1"/>
        <end position="552"/>
    </location>
</feature>
<feature type="short sequence motif" description="'HIGH' region" evidence="1">
    <location>
        <begin position="34"/>
        <end position="44"/>
    </location>
</feature>
<feature type="short sequence motif" description="'KMSKS' region" evidence="1">
    <location>
        <begin position="268"/>
        <end position="272"/>
    </location>
</feature>
<feature type="binding site" evidence="1">
    <location>
        <begin position="35"/>
        <end position="37"/>
    </location>
    <ligand>
        <name>ATP</name>
        <dbReference type="ChEBI" id="CHEBI:30616"/>
    </ligand>
</feature>
<feature type="binding site" evidence="1">
    <location>
        <begin position="41"/>
        <end position="47"/>
    </location>
    <ligand>
        <name>ATP</name>
        <dbReference type="ChEBI" id="CHEBI:30616"/>
    </ligand>
</feature>
<feature type="binding site" evidence="1">
    <location>
        <position position="67"/>
    </location>
    <ligand>
        <name>L-glutamine</name>
        <dbReference type="ChEBI" id="CHEBI:58359"/>
    </ligand>
</feature>
<feature type="binding site" evidence="1">
    <location>
        <position position="212"/>
    </location>
    <ligand>
        <name>L-glutamine</name>
        <dbReference type="ChEBI" id="CHEBI:58359"/>
    </ligand>
</feature>
<feature type="binding site" evidence="1">
    <location>
        <position position="231"/>
    </location>
    <ligand>
        <name>ATP</name>
        <dbReference type="ChEBI" id="CHEBI:30616"/>
    </ligand>
</feature>
<feature type="binding site" evidence="1">
    <location>
        <begin position="261"/>
        <end position="262"/>
    </location>
    <ligand>
        <name>ATP</name>
        <dbReference type="ChEBI" id="CHEBI:30616"/>
    </ligand>
</feature>
<feature type="binding site" evidence="1">
    <location>
        <begin position="269"/>
        <end position="271"/>
    </location>
    <ligand>
        <name>ATP</name>
        <dbReference type="ChEBI" id="CHEBI:30616"/>
    </ligand>
</feature>
<gene>
    <name evidence="1" type="primary">glnS</name>
    <name type="ordered locus">ECA1328</name>
</gene>
<protein>
    <recommendedName>
        <fullName evidence="1">Glutamine--tRNA ligase</fullName>
        <ecNumber evidence="1">6.1.1.18</ecNumber>
    </recommendedName>
    <alternativeName>
        <fullName evidence="1">Glutaminyl-tRNA synthetase</fullName>
        <shortName evidence="1">GlnRS</shortName>
    </alternativeName>
</protein>
<accession>Q6D7J7</accession>
<reference key="1">
    <citation type="journal article" date="2004" name="Proc. Natl. Acad. Sci. U.S.A.">
        <title>Genome sequence of the enterobacterial phytopathogen Erwinia carotovora subsp. atroseptica and characterization of virulence factors.</title>
        <authorList>
            <person name="Bell K.S."/>
            <person name="Sebaihia M."/>
            <person name="Pritchard L."/>
            <person name="Holden M.T.G."/>
            <person name="Hyman L.J."/>
            <person name="Holeva M.C."/>
            <person name="Thomson N.R."/>
            <person name="Bentley S.D."/>
            <person name="Churcher L.J.C."/>
            <person name="Mungall K."/>
            <person name="Atkin R."/>
            <person name="Bason N."/>
            <person name="Brooks K."/>
            <person name="Chillingworth T."/>
            <person name="Clark K."/>
            <person name="Doggett J."/>
            <person name="Fraser A."/>
            <person name="Hance Z."/>
            <person name="Hauser H."/>
            <person name="Jagels K."/>
            <person name="Moule S."/>
            <person name="Norbertczak H."/>
            <person name="Ormond D."/>
            <person name="Price C."/>
            <person name="Quail M.A."/>
            <person name="Sanders M."/>
            <person name="Walker D."/>
            <person name="Whitehead S."/>
            <person name="Salmond G.P.C."/>
            <person name="Birch P.R.J."/>
            <person name="Parkhill J."/>
            <person name="Toth I.K."/>
        </authorList>
    </citation>
    <scope>NUCLEOTIDE SEQUENCE [LARGE SCALE GENOMIC DNA]</scope>
    <source>
        <strain>SCRI 1043 / ATCC BAA-672</strain>
    </source>
</reference>
<proteinExistence type="inferred from homology"/>
<organism>
    <name type="scientific">Pectobacterium atrosepticum (strain SCRI 1043 / ATCC BAA-672)</name>
    <name type="common">Erwinia carotovora subsp. atroseptica</name>
    <dbReference type="NCBI Taxonomy" id="218491"/>
    <lineage>
        <taxon>Bacteria</taxon>
        <taxon>Pseudomonadati</taxon>
        <taxon>Pseudomonadota</taxon>
        <taxon>Gammaproteobacteria</taxon>
        <taxon>Enterobacterales</taxon>
        <taxon>Pectobacteriaceae</taxon>
        <taxon>Pectobacterium</taxon>
    </lineage>
</organism>
<sequence length="552" mass="63182">MSEAEARPTNFIRQIIDEDLASGKHDHIQTRFPPEPNGYLHIGHAKSICLNFGIARDYQGQCNLRFDDTNPVKEDIEYVESIKRDVEWLGFSWSGDVRYSSDYFDQLHAYAVELIGKGLAYVDELTPEQIREYRGTLTAPGKNSPYRDRTVQENLALFEKMRNGGFAEGTACLRAKIDMASSFIVMRDPVLYRIKFADHHQTGNKWCIYPMYDFTHCISDALEGITHSLCTLEFQDNRRLYDWVLDNISIPCHPRQYEFSRLNLEYAIMSKRKLNQLVVENVVEGWDDPRMPTISGLRRRGYSASSIREFCVRIGVTKQDNNVEMAALESCIRDDLNENAPRAMAVLDPVKVVIENLPAGHEEFVAMPNHPNKPEMGSRQVAFSREVYIDRADFREEANKQYKRLVLGKEVRLRNAYVIKADRIEKDEQGTITTIYCSYDAETLSKDPADGRKVKGVIHWVSAAHAVPAEFRLYDRLFSVANPAAADDFLSTINPDSLKITQGFVEASLVQAEVEKAYQFEREGYFCADRVYSSAEHLVFNRTVGLRDTWVG</sequence>